<proteinExistence type="inferred from homology"/>
<feature type="chain" id="PRO_0000335705" description="4-diphosphocytidyl-2-C-methyl-D-erythritol kinase">
    <location>
        <begin position="1"/>
        <end position="298"/>
    </location>
</feature>
<feature type="active site" evidence="1">
    <location>
        <position position="11"/>
    </location>
</feature>
<feature type="active site" evidence="1">
    <location>
        <position position="136"/>
    </location>
</feature>
<feature type="binding site" evidence="1">
    <location>
        <begin position="94"/>
        <end position="104"/>
    </location>
    <ligand>
        <name>ATP</name>
        <dbReference type="ChEBI" id="CHEBI:30616"/>
    </ligand>
</feature>
<dbReference type="EC" id="2.7.1.148" evidence="1"/>
<dbReference type="EMBL" id="CP000285">
    <property type="protein sequence ID" value="ABE58878.1"/>
    <property type="molecule type" value="Genomic_DNA"/>
</dbReference>
<dbReference type="RefSeq" id="WP_011506824.1">
    <property type="nucleotide sequence ID" value="NC_007963.1"/>
</dbReference>
<dbReference type="SMR" id="Q1QXD0"/>
<dbReference type="STRING" id="290398.Csal_1525"/>
<dbReference type="GeneID" id="95334256"/>
<dbReference type="KEGG" id="csa:Csal_1525"/>
<dbReference type="eggNOG" id="COG1947">
    <property type="taxonomic scope" value="Bacteria"/>
</dbReference>
<dbReference type="HOGENOM" id="CLU_053057_3_0_6"/>
<dbReference type="OrthoDB" id="9809438at2"/>
<dbReference type="UniPathway" id="UPA00056">
    <property type="reaction ID" value="UER00094"/>
</dbReference>
<dbReference type="Proteomes" id="UP000000239">
    <property type="component" value="Chromosome"/>
</dbReference>
<dbReference type="GO" id="GO:0050515">
    <property type="term" value="F:4-(cytidine 5'-diphospho)-2-C-methyl-D-erythritol kinase activity"/>
    <property type="evidence" value="ECO:0007669"/>
    <property type="project" value="UniProtKB-UniRule"/>
</dbReference>
<dbReference type="GO" id="GO:0005524">
    <property type="term" value="F:ATP binding"/>
    <property type="evidence" value="ECO:0007669"/>
    <property type="project" value="UniProtKB-UniRule"/>
</dbReference>
<dbReference type="GO" id="GO:0019288">
    <property type="term" value="P:isopentenyl diphosphate biosynthetic process, methylerythritol 4-phosphate pathway"/>
    <property type="evidence" value="ECO:0007669"/>
    <property type="project" value="UniProtKB-UniRule"/>
</dbReference>
<dbReference type="GO" id="GO:0016114">
    <property type="term" value="P:terpenoid biosynthetic process"/>
    <property type="evidence" value="ECO:0007669"/>
    <property type="project" value="InterPro"/>
</dbReference>
<dbReference type="Gene3D" id="3.30.230.10">
    <property type="match status" value="1"/>
</dbReference>
<dbReference type="Gene3D" id="3.30.70.890">
    <property type="entry name" value="GHMP kinase, C-terminal domain"/>
    <property type="match status" value="1"/>
</dbReference>
<dbReference type="HAMAP" id="MF_00061">
    <property type="entry name" value="IspE"/>
    <property type="match status" value="1"/>
</dbReference>
<dbReference type="InterPro" id="IPR013750">
    <property type="entry name" value="GHMP_kinase_C_dom"/>
</dbReference>
<dbReference type="InterPro" id="IPR036554">
    <property type="entry name" value="GHMP_kinase_C_sf"/>
</dbReference>
<dbReference type="InterPro" id="IPR006204">
    <property type="entry name" value="GHMP_kinase_N_dom"/>
</dbReference>
<dbReference type="InterPro" id="IPR004424">
    <property type="entry name" value="IspE"/>
</dbReference>
<dbReference type="InterPro" id="IPR020568">
    <property type="entry name" value="Ribosomal_Su5_D2-typ_SF"/>
</dbReference>
<dbReference type="InterPro" id="IPR014721">
    <property type="entry name" value="Ribsml_uS5_D2-typ_fold_subgr"/>
</dbReference>
<dbReference type="NCBIfam" id="TIGR00154">
    <property type="entry name" value="ispE"/>
    <property type="match status" value="1"/>
</dbReference>
<dbReference type="PANTHER" id="PTHR43527">
    <property type="entry name" value="4-DIPHOSPHOCYTIDYL-2-C-METHYL-D-ERYTHRITOL KINASE, CHLOROPLASTIC"/>
    <property type="match status" value="1"/>
</dbReference>
<dbReference type="PANTHER" id="PTHR43527:SF2">
    <property type="entry name" value="4-DIPHOSPHOCYTIDYL-2-C-METHYL-D-ERYTHRITOL KINASE, CHLOROPLASTIC"/>
    <property type="match status" value="1"/>
</dbReference>
<dbReference type="Pfam" id="PF08544">
    <property type="entry name" value="GHMP_kinases_C"/>
    <property type="match status" value="1"/>
</dbReference>
<dbReference type="Pfam" id="PF00288">
    <property type="entry name" value="GHMP_kinases_N"/>
    <property type="match status" value="1"/>
</dbReference>
<dbReference type="PIRSF" id="PIRSF010376">
    <property type="entry name" value="IspE"/>
    <property type="match status" value="1"/>
</dbReference>
<dbReference type="SUPFAM" id="SSF55060">
    <property type="entry name" value="GHMP Kinase, C-terminal domain"/>
    <property type="match status" value="1"/>
</dbReference>
<dbReference type="SUPFAM" id="SSF54211">
    <property type="entry name" value="Ribosomal protein S5 domain 2-like"/>
    <property type="match status" value="1"/>
</dbReference>
<keyword id="KW-0067">ATP-binding</keyword>
<keyword id="KW-0414">Isoprene biosynthesis</keyword>
<keyword id="KW-0418">Kinase</keyword>
<keyword id="KW-0547">Nucleotide-binding</keyword>
<keyword id="KW-1185">Reference proteome</keyword>
<keyword id="KW-0808">Transferase</keyword>
<reference key="1">
    <citation type="journal article" date="2011" name="Stand. Genomic Sci.">
        <title>Complete genome sequence of the halophilic and highly halotolerant Chromohalobacter salexigens type strain (1H11(T)).</title>
        <authorList>
            <person name="Copeland A."/>
            <person name="O'Connor K."/>
            <person name="Lucas S."/>
            <person name="Lapidus A."/>
            <person name="Berry K.W."/>
            <person name="Detter J.C."/>
            <person name="Del Rio T.G."/>
            <person name="Hammon N."/>
            <person name="Dalin E."/>
            <person name="Tice H."/>
            <person name="Pitluck S."/>
            <person name="Bruce D."/>
            <person name="Goodwin L."/>
            <person name="Han C."/>
            <person name="Tapia R."/>
            <person name="Saunders E."/>
            <person name="Schmutz J."/>
            <person name="Brettin T."/>
            <person name="Larimer F."/>
            <person name="Land M."/>
            <person name="Hauser L."/>
            <person name="Vargas C."/>
            <person name="Nieto J.J."/>
            <person name="Kyrpides N.C."/>
            <person name="Ivanova N."/>
            <person name="Goker M."/>
            <person name="Klenk H.P."/>
            <person name="Csonka L.N."/>
            <person name="Woyke T."/>
        </authorList>
    </citation>
    <scope>NUCLEOTIDE SEQUENCE [LARGE SCALE GENOMIC DNA]</scope>
    <source>
        <strain>ATCC BAA-138 / DSM 3043 / CIP 106854 / NCIMB 13768 / 1H11</strain>
    </source>
</reference>
<accession>Q1QXD0</accession>
<evidence type="ECO:0000255" key="1">
    <source>
        <dbReference type="HAMAP-Rule" id="MF_00061"/>
    </source>
</evidence>
<comment type="function">
    <text evidence="1">Catalyzes the phosphorylation of the position 2 hydroxy group of 4-diphosphocytidyl-2C-methyl-D-erythritol.</text>
</comment>
<comment type="catalytic activity">
    <reaction evidence="1">
        <text>4-CDP-2-C-methyl-D-erythritol + ATP = 4-CDP-2-C-methyl-D-erythritol 2-phosphate + ADP + H(+)</text>
        <dbReference type="Rhea" id="RHEA:18437"/>
        <dbReference type="ChEBI" id="CHEBI:15378"/>
        <dbReference type="ChEBI" id="CHEBI:30616"/>
        <dbReference type="ChEBI" id="CHEBI:57823"/>
        <dbReference type="ChEBI" id="CHEBI:57919"/>
        <dbReference type="ChEBI" id="CHEBI:456216"/>
        <dbReference type="EC" id="2.7.1.148"/>
    </reaction>
</comment>
<comment type="pathway">
    <text evidence="1">Isoprenoid biosynthesis; isopentenyl diphosphate biosynthesis via DXP pathway; isopentenyl diphosphate from 1-deoxy-D-xylulose 5-phosphate: step 3/6.</text>
</comment>
<comment type="similarity">
    <text evidence="1">Belongs to the GHMP kinase family. IspE subfamily.</text>
</comment>
<gene>
    <name evidence="1" type="primary">ispE</name>
    <name type="ordered locus">Csal_1525</name>
</gene>
<organism>
    <name type="scientific">Chromohalobacter salexigens (strain ATCC BAA-138 / DSM 3043 / CIP 106854 / NCIMB 13768 / 1H11)</name>
    <dbReference type="NCBI Taxonomy" id="290398"/>
    <lineage>
        <taxon>Bacteria</taxon>
        <taxon>Pseudomonadati</taxon>
        <taxon>Pseudomonadota</taxon>
        <taxon>Gammaproteobacteria</taxon>
        <taxon>Oceanospirillales</taxon>
        <taxon>Halomonadaceae</taxon>
        <taxon>Chromohalobacter</taxon>
    </lineage>
</organism>
<sequence>MQRLSLPAPAKLNRMLHIVGRRADGYHELQTLFQFLDRSDTLHFSPRADGAIHLAPAIADVDHDANLIVRAARLLQHASGTHQGVDIHLDKRLPMGGGLGGGSSDAATTLLALDRLWSLDLGLPRLAELGLTLGADVPVFVRGHSAWAEGIGERLTPVTLDTPWFVVIHPGEEIATPAVFGHPELTRDTPPISMARALRGGAEQGRAWRNDCEAVVRRLSPDVAHALDWLSAFGPAMLTGTGSCLFCPLTSERQADRILRRVGSHWHAFKARGCNTSPLHDALGIHDEWSPMSQYGDA</sequence>
<protein>
    <recommendedName>
        <fullName evidence="1">4-diphosphocytidyl-2-C-methyl-D-erythritol kinase</fullName>
        <shortName evidence="1">CMK</shortName>
        <ecNumber evidence="1">2.7.1.148</ecNumber>
    </recommendedName>
    <alternativeName>
        <fullName evidence="1">4-(cytidine-5'-diphospho)-2-C-methyl-D-erythritol kinase</fullName>
    </alternativeName>
</protein>
<name>ISPE_CHRSD</name>